<keyword id="KW-0456">Lyase</keyword>
<keyword id="KW-0460">Magnesium</keyword>
<keyword id="KW-0479">Metal-binding</keyword>
<dbReference type="EC" id="4.1.2.53" evidence="1"/>
<dbReference type="EMBL" id="CP000647">
    <property type="protein sequence ID" value="ABR78067.1"/>
    <property type="molecule type" value="Genomic_DNA"/>
</dbReference>
<dbReference type="SMR" id="A6TBU6"/>
<dbReference type="STRING" id="272620.KPN_02650"/>
<dbReference type="PaxDb" id="272620-KPN_02650"/>
<dbReference type="EnsemblBacteria" id="ABR78067">
    <property type="protein sequence ID" value="ABR78067"/>
    <property type="gene ID" value="KPN_02650"/>
</dbReference>
<dbReference type="KEGG" id="kpn:KPN_02650"/>
<dbReference type="HOGENOM" id="CLU_059964_1_0_6"/>
<dbReference type="Proteomes" id="UP000000265">
    <property type="component" value="Chromosome"/>
</dbReference>
<dbReference type="GO" id="GO:0005737">
    <property type="term" value="C:cytoplasm"/>
    <property type="evidence" value="ECO:0007669"/>
    <property type="project" value="TreeGrafter"/>
</dbReference>
<dbReference type="GO" id="GO:0106099">
    <property type="term" value="F:2-keto-3-deoxy-L-rhamnonate aldolase activity"/>
    <property type="evidence" value="ECO:0007669"/>
    <property type="project" value="UniProtKB-EC"/>
</dbReference>
<dbReference type="GO" id="GO:0000287">
    <property type="term" value="F:magnesium ion binding"/>
    <property type="evidence" value="ECO:0007669"/>
    <property type="project" value="UniProtKB-UniRule"/>
</dbReference>
<dbReference type="FunFam" id="3.20.20.60:FF:000004">
    <property type="entry name" value="5-keto-4-deoxy-D-glucarate aldolase"/>
    <property type="match status" value="1"/>
</dbReference>
<dbReference type="Gene3D" id="3.20.20.60">
    <property type="entry name" value="Phosphoenolpyruvate-binding domains"/>
    <property type="match status" value="1"/>
</dbReference>
<dbReference type="HAMAP" id="MF_01290">
    <property type="entry name" value="KDR_aldolase"/>
    <property type="match status" value="1"/>
</dbReference>
<dbReference type="InterPro" id="IPR005000">
    <property type="entry name" value="Aldolase/citrate-lyase_domain"/>
</dbReference>
<dbReference type="InterPro" id="IPR050251">
    <property type="entry name" value="HpcH-HpaI_aldolase"/>
</dbReference>
<dbReference type="InterPro" id="IPR023593">
    <property type="entry name" value="KDR_aldolase"/>
</dbReference>
<dbReference type="InterPro" id="IPR015813">
    <property type="entry name" value="Pyrv/PenolPyrv_kinase-like_dom"/>
</dbReference>
<dbReference type="InterPro" id="IPR040442">
    <property type="entry name" value="Pyrv_kinase-like_dom_sf"/>
</dbReference>
<dbReference type="NCBIfam" id="NF007521">
    <property type="entry name" value="PRK10128.1"/>
    <property type="match status" value="1"/>
</dbReference>
<dbReference type="PANTHER" id="PTHR30502">
    <property type="entry name" value="2-KETO-3-DEOXY-L-RHAMNONATE ALDOLASE"/>
    <property type="match status" value="1"/>
</dbReference>
<dbReference type="PANTHER" id="PTHR30502:SF5">
    <property type="entry name" value="2-KETO-3-DEOXY-L-RHAMNONATE ALDOLASE"/>
    <property type="match status" value="1"/>
</dbReference>
<dbReference type="Pfam" id="PF03328">
    <property type="entry name" value="HpcH_HpaI"/>
    <property type="match status" value="1"/>
</dbReference>
<dbReference type="SUPFAM" id="SSF51621">
    <property type="entry name" value="Phosphoenolpyruvate/pyruvate domain"/>
    <property type="match status" value="1"/>
</dbReference>
<name>RHMA_KLEP7</name>
<comment type="function">
    <text evidence="1">Catalyzes the reversible retro-aldol cleavage of 2-keto-3-deoxy-L-rhamnonate (KDR) to pyruvate and lactaldehyde.</text>
</comment>
<comment type="catalytic activity">
    <reaction evidence="1">
        <text>2-dehydro-3-deoxy-L-rhamnonate = (S)-lactaldehyde + pyruvate</text>
        <dbReference type="Rhea" id="RHEA:25784"/>
        <dbReference type="ChEBI" id="CHEBI:15361"/>
        <dbReference type="ChEBI" id="CHEBI:18041"/>
        <dbReference type="ChEBI" id="CHEBI:58371"/>
        <dbReference type="EC" id="4.1.2.53"/>
    </reaction>
</comment>
<comment type="cofactor">
    <cofactor evidence="1">
        <name>Mg(2+)</name>
        <dbReference type="ChEBI" id="CHEBI:18420"/>
    </cofactor>
    <text evidence="1">Binds 1 Mg(2+) ion per subunit.</text>
</comment>
<comment type="subunit">
    <text evidence="1">Homohexamer.</text>
</comment>
<comment type="similarity">
    <text evidence="1">Belongs to the HpcH/HpaI aldolase family. KDR aldolase subfamily.</text>
</comment>
<sequence length="267" mass="28917">MNALLSNPFKRGLLRGETQIGLWLSSTSSYMAEIAATSGYDWLLIDGEHAPNTIQDLYHQLQAIAPYASQPVIRPVEGNRSLIKQVLDIGARTLLVPMVDTAEQAREVVSATRYPPIGSRGVGAGVARAARWGRVENYMAEANDELCLLIQVESRTALENLDAILEVDGIDGVFIGPADLSASLGYPDDAGHPDVQRVIEQSIRRIRAAGKAAGFLAVDPAMAEKCLAWGANFVAVGVDTMLYTQALDRRLAMFKSDSAQPQEKTSY</sequence>
<organism>
    <name type="scientific">Klebsiella pneumoniae subsp. pneumoniae (strain ATCC 700721 / MGH 78578)</name>
    <dbReference type="NCBI Taxonomy" id="272620"/>
    <lineage>
        <taxon>Bacteria</taxon>
        <taxon>Pseudomonadati</taxon>
        <taxon>Pseudomonadota</taxon>
        <taxon>Gammaproteobacteria</taxon>
        <taxon>Enterobacterales</taxon>
        <taxon>Enterobacteriaceae</taxon>
        <taxon>Klebsiella/Raoultella group</taxon>
        <taxon>Klebsiella</taxon>
        <taxon>Klebsiella pneumoniae complex</taxon>
    </lineage>
</organism>
<gene>
    <name evidence="1" type="primary">rhmA</name>
    <name type="ordered locus">KPN78578_26060</name>
    <name type="ORF">KPN_02650</name>
</gene>
<evidence type="ECO:0000255" key="1">
    <source>
        <dbReference type="HAMAP-Rule" id="MF_01290"/>
    </source>
</evidence>
<proteinExistence type="inferred from homology"/>
<accession>A6TBU6</accession>
<protein>
    <recommendedName>
        <fullName evidence="1">2-keto-3-deoxy-L-rhamnonate aldolase</fullName>
        <shortName evidence="1">KDR aldolase</shortName>
        <ecNumber evidence="1">4.1.2.53</ecNumber>
    </recommendedName>
    <alternativeName>
        <fullName evidence="1">2-dehydro-3-deoxyrhamnonate aldolase</fullName>
    </alternativeName>
</protein>
<reference key="1">
    <citation type="submission" date="2006-09" db="EMBL/GenBank/DDBJ databases">
        <authorList>
            <consortium name="The Klebsiella pneumonia Genome Sequencing Project"/>
            <person name="McClelland M."/>
            <person name="Sanderson E.K."/>
            <person name="Spieth J."/>
            <person name="Clifton W.S."/>
            <person name="Latreille P."/>
            <person name="Sabo A."/>
            <person name="Pepin K."/>
            <person name="Bhonagiri V."/>
            <person name="Porwollik S."/>
            <person name="Ali J."/>
            <person name="Wilson R.K."/>
        </authorList>
    </citation>
    <scope>NUCLEOTIDE SEQUENCE [LARGE SCALE GENOMIC DNA]</scope>
    <source>
        <strain>ATCC 700721 / MGH 78578</strain>
    </source>
</reference>
<feature type="chain" id="PRO_0000353172" description="2-keto-3-deoxy-L-rhamnonate aldolase">
    <location>
        <begin position="1"/>
        <end position="267"/>
    </location>
</feature>
<feature type="active site" description="Proton acceptor" evidence="1">
    <location>
        <position position="49"/>
    </location>
</feature>
<feature type="binding site" evidence="1">
    <location>
        <position position="151"/>
    </location>
    <ligand>
        <name>substrate</name>
    </ligand>
</feature>
<feature type="binding site" evidence="1">
    <location>
        <position position="153"/>
    </location>
    <ligand>
        <name>Mg(2+)</name>
        <dbReference type="ChEBI" id="CHEBI:18420"/>
    </ligand>
</feature>
<feature type="binding site" evidence="1">
    <location>
        <position position="178"/>
    </location>
    <ligand>
        <name>substrate</name>
    </ligand>
</feature>
<feature type="binding site" evidence="1">
    <location>
        <position position="179"/>
    </location>
    <ligand>
        <name>Mg(2+)</name>
        <dbReference type="ChEBI" id="CHEBI:18420"/>
    </ligand>
</feature>
<feature type="binding site" evidence="1">
    <location>
        <position position="179"/>
    </location>
    <ligand>
        <name>substrate</name>
    </ligand>
</feature>
<feature type="site" description="Transition state stabilizer" evidence="1">
    <location>
        <position position="74"/>
    </location>
</feature>
<feature type="site" description="Increases basicity of active site His" evidence="1">
    <location>
        <position position="88"/>
    </location>
</feature>